<keyword id="KW-0255">Endonuclease</keyword>
<keyword id="KW-0378">Hydrolase</keyword>
<keyword id="KW-0540">Nuclease</keyword>
<keyword id="KW-0819">tRNA processing</keyword>
<proteinExistence type="inferred from homology"/>
<organism>
    <name type="scientific">Hydrogenobaculum sp. (strain Y04AAS1)</name>
    <dbReference type="NCBI Taxonomy" id="380749"/>
    <lineage>
        <taxon>Bacteria</taxon>
        <taxon>Pseudomonadati</taxon>
        <taxon>Aquificota</taxon>
        <taxon>Aquificia</taxon>
        <taxon>Aquificales</taxon>
        <taxon>Aquificaceae</taxon>
        <taxon>Hydrogenobaculum</taxon>
    </lineage>
</organism>
<feature type="chain" id="PRO_0000366687" description="RNA-free ribonuclease P">
    <location>
        <begin position="1"/>
        <end position="186"/>
    </location>
</feature>
<accession>B4U969</accession>
<protein>
    <recommendedName>
        <fullName evidence="1">RNA-free ribonuclease P</fullName>
        <shortName evidence="1">RNA-free RNase P</shortName>
        <ecNumber evidence="1">3.1.26.5</ecNumber>
    </recommendedName>
    <alternativeName>
        <fullName evidence="1">Protein-only RNase P</fullName>
    </alternativeName>
</protein>
<comment type="function">
    <text evidence="1">RNA-free RNase P that catalyzes the removal of the 5'-leader sequence from pre-tRNA to produce the mature 5'-terminus.</text>
</comment>
<comment type="catalytic activity">
    <reaction evidence="1">
        <text>Endonucleolytic cleavage of RNA, removing 5'-extranucleotides from tRNA precursor.</text>
        <dbReference type="EC" id="3.1.26.5"/>
    </reaction>
</comment>
<comment type="similarity">
    <text evidence="1">Belongs to the HARP family.</text>
</comment>
<sequence>MQDNVIIDTSIFTNPNIYKSISLEQPIDAIEAFIGLTHKSSKKIYMPRTVYIELCKVVDLESIKSRFESSIIIKSPNRCNITINALALFDFVEDMRIRINKGLRIAEEFARDKTQDIQNTISKLREKYKEALRQGTLDSKEDVDVILLALELNGVILSGDEGINSWADKFGIRTVNPLFIQEFLSF</sequence>
<reference key="1">
    <citation type="journal article" date="2009" name="J. Bacteriol.">
        <title>Complete and draft genome sequences of six members of the Aquificales.</title>
        <authorList>
            <person name="Reysenbach A.-L."/>
            <person name="Hamamura N."/>
            <person name="Podar M."/>
            <person name="Griffiths E."/>
            <person name="Ferreira S."/>
            <person name="Hochstein R."/>
            <person name="Heidelberg J."/>
            <person name="Johnson J."/>
            <person name="Mead D."/>
            <person name="Pohorille A."/>
            <person name="Sarmiento M."/>
            <person name="Schweighofer K."/>
            <person name="Seshadri R."/>
            <person name="Voytek M.A."/>
        </authorList>
    </citation>
    <scope>NUCLEOTIDE SEQUENCE [LARGE SCALE GENOMIC DNA]</scope>
    <source>
        <strain>Y04AAS1</strain>
    </source>
</reference>
<gene>
    <name type="ordered locus">HY04AAS1_0994</name>
</gene>
<name>RFRNP_HYDS0</name>
<dbReference type="EC" id="3.1.26.5" evidence="1"/>
<dbReference type="EMBL" id="CP001130">
    <property type="protein sequence ID" value="ACG57680.1"/>
    <property type="molecule type" value="Genomic_DNA"/>
</dbReference>
<dbReference type="RefSeq" id="WP_012514036.1">
    <property type="nucleotide sequence ID" value="NC_011126.1"/>
</dbReference>
<dbReference type="SMR" id="B4U969"/>
<dbReference type="STRING" id="380749.HY04AAS1_0994"/>
<dbReference type="KEGG" id="hya:HY04AAS1_0994"/>
<dbReference type="eggNOG" id="COG1458">
    <property type="taxonomic scope" value="Bacteria"/>
</dbReference>
<dbReference type="HOGENOM" id="CLU_109672_0_0_0"/>
<dbReference type="OrthoDB" id="263154at2"/>
<dbReference type="GO" id="GO:0004526">
    <property type="term" value="F:ribonuclease P activity"/>
    <property type="evidence" value="ECO:0007669"/>
    <property type="project" value="UniProtKB-UniRule"/>
</dbReference>
<dbReference type="GO" id="GO:0001682">
    <property type="term" value="P:tRNA 5'-leader removal"/>
    <property type="evidence" value="ECO:0007669"/>
    <property type="project" value="UniProtKB-UniRule"/>
</dbReference>
<dbReference type="CDD" id="cd18691">
    <property type="entry name" value="PIN_VapC-like"/>
    <property type="match status" value="1"/>
</dbReference>
<dbReference type="HAMAP" id="MF_01078">
    <property type="entry name" value="RNA_free_RNase_P"/>
    <property type="match status" value="1"/>
</dbReference>
<dbReference type="InterPro" id="IPR029060">
    <property type="entry name" value="PIN-like_dom_sf"/>
</dbReference>
<dbReference type="InterPro" id="IPR014856">
    <property type="entry name" value="RNA_free_RNase_P"/>
</dbReference>
<dbReference type="NCBIfam" id="NF003344">
    <property type="entry name" value="PRK04358.1-5"/>
    <property type="match status" value="1"/>
</dbReference>
<dbReference type="NCBIfam" id="TIGR03875">
    <property type="entry name" value="RNA_lig_partner"/>
    <property type="match status" value="1"/>
</dbReference>
<dbReference type="PANTHER" id="PTHR41173:SF1">
    <property type="entry name" value="RNA-FREE RIBONUCLEASE P"/>
    <property type="match status" value="1"/>
</dbReference>
<dbReference type="PANTHER" id="PTHR41173">
    <property type="entry name" value="UPF0278 PROTEIN TK1425"/>
    <property type="match status" value="1"/>
</dbReference>
<dbReference type="Pfam" id="PF08745">
    <property type="entry name" value="PIN_5"/>
    <property type="match status" value="1"/>
</dbReference>
<dbReference type="SUPFAM" id="SSF88723">
    <property type="entry name" value="PIN domain-like"/>
    <property type="match status" value="1"/>
</dbReference>
<evidence type="ECO:0000255" key="1">
    <source>
        <dbReference type="HAMAP-Rule" id="MF_01078"/>
    </source>
</evidence>